<reference key="1">
    <citation type="journal article" date="1997" name="Nature">
        <title>Molecular basis of symbiosis between Rhizobium and legumes.</title>
        <authorList>
            <person name="Freiberg C.A."/>
            <person name="Fellay R."/>
            <person name="Bairoch A."/>
            <person name="Broughton W.J."/>
            <person name="Rosenthal A."/>
            <person name="Perret X."/>
        </authorList>
    </citation>
    <scope>NUCLEOTIDE SEQUENCE [LARGE SCALE GENOMIC DNA]</scope>
    <source>
        <strain>NBRC 101917 / NGR234</strain>
    </source>
</reference>
<reference key="2">
    <citation type="journal article" date="2009" name="Appl. Environ. Microbiol.">
        <title>Rhizobium sp. strain NGR234 possesses a remarkable number of secretion systems.</title>
        <authorList>
            <person name="Schmeisser C."/>
            <person name="Liesegang H."/>
            <person name="Krysciak D."/>
            <person name="Bakkou N."/>
            <person name="Le Quere A."/>
            <person name="Wollherr A."/>
            <person name="Heinemeyer I."/>
            <person name="Morgenstern B."/>
            <person name="Pommerening-Roeser A."/>
            <person name="Flores M."/>
            <person name="Palacios R."/>
            <person name="Brenner S."/>
            <person name="Gottschalk G."/>
            <person name="Schmitz R.A."/>
            <person name="Broughton W.J."/>
            <person name="Perret X."/>
            <person name="Strittmatter A.W."/>
            <person name="Streit W.R."/>
        </authorList>
    </citation>
    <scope>NUCLEOTIDE SEQUENCE [LARGE SCALE GENOMIC DNA]</scope>
    <source>
        <strain>NBRC 101917 / NGR234</strain>
    </source>
</reference>
<name>Y4KA_SINFN</name>
<keyword id="KW-0614">Plasmid</keyword>
<keyword id="KW-1185">Reference proteome</keyword>
<proteinExistence type="predicted"/>
<feature type="chain" id="PRO_0000200884" description="Uncharacterized protein y4kA">
    <location>
        <begin position="1"/>
        <end position="322"/>
    </location>
</feature>
<feature type="region of interest" description="Disordered" evidence="1">
    <location>
        <begin position="269"/>
        <end position="289"/>
    </location>
</feature>
<sequence length="322" mass="36690">MRHAIALTAAAALLPNCAIRPLPEDVTRLNTYAIVTRIRCEARDAVLSELLEYLKNSRSNVSPEIVTQIEEDPNTIANFDRSRLPNATRKKIDLYANAAIVYDFEFDMSQHSRNSLGATLNDTWSSGIFNLGVSGAHERTRRNQRRFRVEDNFYKLFTDPPRCEPYSENGKFKREKNYAYPITGYIGLQEIIDTFWRLNEDHILGSTDSGQPKVNKLADEIQFTTKNSFSATPSAELDPANHLKIVAVDAESSHWRQDIHTVTIGVAVQDEEEEPRDERRPRRRLGKAQSAIKNANDAINELQLRNIQILNRSDLQQLLPNL</sequence>
<protein>
    <recommendedName>
        <fullName>Uncharacterized protein y4kA</fullName>
    </recommendedName>
</protein>
<accession>P55521</accession>
<evidence type="ECO:0000256" key="1">
    <source>
        <dbReference type="SAM" id="MobiDB-lite"/>
    </source>
</evidence>
<geneLocation type="plasmid">
    <name>sym pNGR234a</name>
</geneLocation>
<gene>
    <name type="ordered locus">NGR_a02940</name>
    <name type="ORF">y4kA</name>
</gene>
<dbReference type="EMBL" id="U00090">
    <property type="protein sequence ID" value="AAB91733.1"/>
    <property type="molecule type" value="Genomic_DNA"/>
</dbReference>
<dbReference type="RefSeq" id="NP_443931.1">
    <property type="nucleotide sequence ID" value="NC_000914.2"/>
</dbReference>
<dbReference type="RefSeq" id="WP_010875317.1">
    <property type="nucleotide sequence ID" value="NC_000914.2"/>
</dbReference>
<dbReference type="KEGG" id="rhi:NGR_a02940"/>
<dbReference type="eggNOG" id="ENOG5032WBI">
    <property type="taxonomic scope" value="Bacteria"/>
</dbReference>
<dbReference type="HOGENOM" id="CLU_067803_0_0_5"/>
<dbReference type="OrthoDB" id="8441909at2"/>
<dbReference type="Proteomes" id="UP000001054">
    <property type="component" value="Plasmid pNGR234a"/>
</dbReference>
<organism>
    <name type="scientific">Sinorhizobium fredii (strain NBRC 101917 / NGR234)</name>
    <dbReference type="NCBI Taxonomy" id="394"/>
    <lineage>
        <taxon>Bacteria</taxon>
        <taxon>Pseudomonadati</taxon>
        <taxon>Pseudomonadota</taxon>
        <taxon>Alphaproteobacteria</taxon>
        <taxon>Hyphomicrobiales</taxon>
        <taxon>Rhizobiaceae</taxon>
        <taxon>Sinorhizobium/Ensifer group</taxon>
        <taxon>Sinorhizobium</taxon>
    </lineage>
</organism>